<organism>
    <name type="scientific">Salmonella choleraesuis (strain SC-B67)</name>
    <dbReference type="NCBI Taxonomy" id="321314"/>
    <lineage>
        <taxon>Bacteria</taxon>
        <taxon>Pseudomonadati</taxon>
        <taxon>Pseudomonadota</taxon>
        <taxon>Gammaproteobacteria</taxon>
        <taxon>Enterobacterales</taxon>
        <taxon>Enterobacteriaceae</taxon>
        <taxon>Salmonella</taxon>
    </lineage>
</organism>
<evidence type="ECO:0000255" key="1">
    <source>
        <dbReference type="HAMAP-Rule" id="MF_01587"/>
    </source>
</evidence>
<evidence type="ECO:0000305" key="2"/>
<proteinExistence type="inferred from homology"/>
<comment type="function">
    <text evidence="1">Catalyzes the formation of phosphodiester linkages between 5'-phosphoryl and 3'-hydroxyl groups in double-stranded DNA using NAD as a coenzyme and as the energy source for the reaction.</text>
</comment>
<comment type="catalytic activity">
    <reaction evidence="1">
        <text>NAD(+) + (deoxyribonucleotide)n-3'-hydroxyl + 5'-phospho-(deoxyribonucleotide)m = (deoxyribonucleotide)n+m + AMP + beta-nicotinamide D-nucleotide.</text>
        <dbReference type="EC" id="6.5.1.2"/>
    </reaction>
</comment>
<comment type="similarity">
    <text evidence="1">Belongs to the NAD-dependent DNA ligase family. LigB subfamily.</text>
</comment>
<comment type="sequence caution" evidence="2">
    <conflict type="erroneous initiation">
        <sequence resource="EMBL-CDS" id="AAX67568"/>
    </conflict>
</comment>
<accession>Q57I94</accession>
<feature type="chain" id="PRO_0000313551" description="DNA ligase B">
    <location>
        <begin position="1"/>
        <end position="561"/>
    </location>
</feature>
<feature type="active site" description="N6-AMP-lysine intermediate" evidence="1">
    <location>
        <position position="125"/>
    </location>
</feature>
<name>LIGB_SALCH</name>
<reference key="1">
    <citation type="journal article" date="2005" name="Nucleic Acids Res.">
        <title>The genome sequence of Salmonella enterica serovar Choleraesuis, a highly invasive and resistant zoonotic pathogen.</title>
        <authorList>
            <person name="Chiu C.-H."/>
            <person name="Tang P."/>
            <person name="Chu C."/>
            <person name="Hu S."/>
            <person name="Bao Q."/>
            <person name="Yu J."/>
            <person name="Chou Y.-Y."/>
            <person name="Wang H.-S."/>
            <person name="Lee Y.-S."/>
        </authorList>
    </citation>
    <scope>NUCLEOTIDE SEQUENCE [LARGE SCALE GENOMIC DNA]</scope>
    <source>
        <strain>SC-B67</strain>
    </source>
</reference>
<sequence length="561" mass="62855">MRLWKSMAWGILLWHSQSGALCPAWPPARAAEEITRLQQQLADWNDIYWKQGVSAVDDSVYDQLSARLVQWQRCVGQDVSSTPVSPPLNGTTMHPVAHTGVRKLADRQAVEQWMRGRSELWVQPKVDGVAVTLVYQNGKLTRAISRGNGLQGEDWTPKIRLIPSIPQTTQGALANAVLQGEIFLQREGHIQQRMGGMNARSKVAGMLMRQDNASALNSLGIFIWAWPDGPANMPERLSQLAKAGFSLTNKYTLAVKDASEVERARQSWLTSALPFVTDGVVIRMAKEPASQHWRPGQGDWLAAWKYPPVAQVAQVSAIQFSVGKSGKITVVASLVPVILDDKRVQRVNIGSVKRWEAWDIAPGDQILVSLAGQGIPRLDEVVWRSRERSKPVPPDSHFNSLTCFYASATCQEQFISRLVWLGSRSALGLDGMGEASWRALHQTHRFEHIFSWLALTSAQIANTPGFAKGKSEQIWRQFNLARRQPFTRWIMAMDIPLTQAALQASGDRSWEQLLMRTEQHWRQLPATGERRAGRVIDWRDNPQIKTLSRWLAAQHIPGFGS</sequence>
<dbReference type="EC" id="6.5.1.2" evidence="1"/>
<dbReference type="EMBL" id="AE017220">
    <property type="protein sequence ID" value="AAX67568.1"/>
    <property type="status" value="ALT_INIT"/>
    <property type="molecule type" value="Genomic_DNA"/>
</dbReference>
<dbReference type="RefSeq" id="WP_001241849.1">
    <property type="nucleotide sequence ID" value="NC_006905.1"/>
</dbReference>
<dbReference type="SMR" id="Q57I94"/>
<dbReference type="KEGG" id="sec:SCH_3662"/>
<dbReference type="HOGENOM" id="CLU_489786_0_0_6"/>
<dbReference type="Proteomes" id="UP000000538">
    <property type="component" value="Chromosome"/>
</dbReference>
<dbReference type="GO" id="GO:0003911">
    <property type="term" value="F:DNA ligase (NAD+) activity"/>
    <property type="evidence" value="ECO:0007669"/>
    <property type="project" value="UniProtKB-UniRule"/>
</dbReference>
<dbReference type="GO" id="GO:0006281">
    <property type="term" value="P:DNA repair"/>
    <property type="evidence" value="ECO:0007669"/>
    <property type="project" value="UniProtKB-KW"/>
</dbReference>
<dbReference type="GO" id="GO:0006260">
    <property type="term" value="P:DNA replication"/>
    <property type="evidence" value="ECO:0007669"/>
    <property type="project" value="UniProtKB-KW"/>
</dbReference>
<dbReference type="FunFam" id="1.10.287.610:FF:000003">
    <property type="entry name" value="DNA ligase B"/>
    <property type="match status" value="1"/>
</dbReference>
<dbReference type="FunFam" id="2.40.50.140:FF:000139">
    <property type="entry name" value="DNA ligase B"/>
    <property type="match status" value="1"/>
</dbReference>
<dbReference type="FunFam" id="3.30.470.30:FF:000007">
    <property type="entry name" value="DNA ligase B"/>
    <property type="match status" value="1"/>
</dbReference>
<dbReference type="Gene3D" id="1.10.150.20">
    <property type="entry name" value="5' to 3' exonuclease, C-terminal subdomain"/>
    <property type="match status" value="1"/>
</dbReference>
<dbReference type="Gene3D" id="3.30.470.30">
    <property type="entry name" value="DNA ligase/mRNA capping enzyme"/>
    <property type="match status" value="1"/>
</dbReference>
<dbReference type="Gene3D" id="1.10.287.610">
    <property type="entry name" value="Helix hairpin bin"/>
    <property type="match status" value="1"/>
</dbReference>
<dbReference type="Gene3D" id="2.40.50.140">
    <property type="entry name" value="Nucleic acid-binding proteins"/>
    <property type="match status" value="1"/>
</dbReference>
<dbReference type="HAMAP" id="MF_01587">
    <property type="entry name" value="DNA_ligase_B"/>
    <property type="match status" value="1"/>
</dbReference>
<dbReference type="InterPro" id="IPR018239">
    <property type="entry name" value="DNA_ligase_AS"/>
</dbReference>
<dbReference type="InterPro" id="IPR020923">
    <property type="entry name" value="DNA_ligase_B"/>
</dbReference>
<dbReference type="InterPro" id="IPR033136">
    <property type="entry name" value="DNA_ligase_CS"/>
</dbReference>
<dbReference type="InterPro" id="IPR013839">
    <property type="entry name" value="DNAligase_adenylation"/>
</dbReference>
<dbReference type="InterPro" id="IPR013840">
    <property type="entry name" value="DNAligase_N"/>
</dbReference>
<dbReference type="InterPro" id="IPR012340">
    <property type="entry name" value="NA-bd_OB-fold"/>
</dbReference>
<dbReference type="InterPro" id="IPR050326">
    <property type="entry name" value="NAD_dep_DNA_ligaseB"/>
</dbReference>
<dbReference type="InterPro" id="IPR004150">
    <property type="entry name" value="NAD_DNA_ligase_OB"/>
</dbReference>
<dbReference type="InterPro" id="IPR010994">
    <property type="entry name" value="RuvA_2-like"/>
</dbReference>
<dbReference type="NCBIfam" id="NF005987">
    <property type="entry name" value="PRK08097.1"/>
    <property type="match status" value="1"/>
</dbReference>
<dbReference type="PANTHER" id="PTHR47810">
    <property type="entry name" value="DNA LIGASE"/>
    <property type="match status" value="1"/>
</dbReference>
<dbReference type="PANTHER" id="PTHR47810:SF1">
    <property type="entry name" value="DNA LIGASE B"/>
    <property type="match status" value="1"/>
</dbReference>
<dbReference type="Pfam" id="PF01653">
    <property type="entry name" value="DNA_ligase_aden"/>
    <property type="match status" value="1"/>
</dbReference>
<dbReference type="Pfam" id="PF03120">
    <property type="entry name" value="DNA_ligase_OB"/>
    <property type="match status" value="1"/>
</dbReference>
<dbReference type="SMART" id="SM00532">
    <property type="entry name" value="LIGANc"/>
    <property type="match status" value="1"/>
</dbReference>
<dbReference type="SUPFAM" id="SSF56091">
    <property type="entry name" value="DNA ligase/mRNA capping enzyme, catalytic domain"/>
    <property type="match status" value="1"/>
</dbReference>
<dbReference type="SUPFAM" id="SSF50249">
    <property type="entry name" value="Nucleic acid-binding proteins"/>
    <property type="match status" value="1"/>
</dbReference>
<dbReference type="SUPFAM" id="SSF47781">
    <property type="entry name" value="RuvA domain 2-like"/>
    <property type="match status" value="1"/>
</dbReference>
<dbReference type="PROSITE" id="PS01055">
    <property type="entry name" value="DNA_LIGASE_N1"/>
    <property type="match status" value="1"/>
</dbReference>
<dbReference type="PROSITE" id="PS01056">
    <property type="entry name" value="DNA_LIGASE_N2"/>
    <property type="match status" value="1"/>
</dbReference>
<gene>
    <name evidence="1" type="primary">ligB</name>
    <name type="ordered locus">SCH_3662</name>
</gene>
<protein>
    <recommendedName>
        <fullName evidence="1">DNA ligase B</fullName>
        <ecNumber evidence="1">6.5.1.2</ecNumber>
    </recommendedName>
    <alternativeName>
        <fullName evidence="1">Polydeoxyribonucleotide synthase [NAD(+)] B</fullName>
    </alternativeName>
</protein>
<keyword id="KW-0227">DNA damage</keyword>
<keyword id="KW-0234">DNA repair</keyword>
<keyword id="KW-0235">DNA replication</keyword>
<keyword id="KW-0436">Ligase</keyword>
<keyword id="KW-0520">NAD</keyword>